<accession>P05721</accession>
<comment type="subcellular location">
    <subcellularLocation>
        <location>Plastid</location>
        <location>Chloroplast</location>
    </subcellularLocation>
</comment>
<sequence>MFILGKSNYTNFIYGHLVIRHIKYKLFDDYKKLIKKLSSKLKTSNSTKANLGDNFSLTLPTWPFFILSWFLHIRTLEFSSNGNKTANSISSVFFLFPKLLNVV</sequence>
<protein>
    <recommendedName>
        <fullName>Uncharacterized 11.9 kDa protein in 16S-23S DNA spacer</fullName>
    </recommendedName>
</protein>
<name>YCX2_AUXPY</name>
<organism>
    <name type="scientific">Auxenochlorella pyrenoidosa</name>
    <name type="common">Freshwater green alga</name>
    <name type="synonym">Chlorella pyrenoidosa</name>
    <dbReference type="NCBI Taxonomy" id="3078"/>
    <lineage>
        <taxon>Eukaryota</taxon>
        <taxon>Viridiplantae</taxon>
        <taxon>Chlorophyta</taxon>
        <taxon>core chlorophytes</taxon>
        <taxon>Trebouxiophyceae</taxon>
        <taxon>Chlorellales</taxon>
        <taxon>Chlorellaceae</taxon>
        <taxon>Auxenochlorella</taxon>
    </lineage>
</organism>
<proteinExistence type="predicted"/>
<reference key="1">
    <citation type="journal article" date="1986" name="Nucleic Acids Res.">
        <title>Peculiar feature of the organization of rRNA genes of the Chlorella chloroplast DNA.</title>
        <authorList>
            <person name="Yamada T."/>
            <person name="Shimaji M."/>
        </authorList>
    </citation>
    <scope>NUCLEOTIDE SEQUENCE [GENOMIC DNA]</scope>
</reference>
<geneLocation type="chloroplast"/>
<dbReference type="EMBL" id="X03848">
    <property type="protein sequence ID" value="CAA27480.1"/>
    <property type="molecule type" value="Genomic_DNA"/>
</dbReference>
<dbReference type="PIR" id="D24444">
    <property type="entry name" value="D24444"/>
</dbReference>
<dbReference type="SMR" id="P05721"/>
<dbReference type="GO" id="GO:0009507">
    <property type="term" value="C:chloroplast"/>
    <property type="evidence" value="ECO:0007669"/>
    <property type="project" value="UniProtKB-SubCell"/>
</dbReference>
<keyword id="KW-0150">Chloroplast</keyword>
<keyword id="KW-0934">Plastid</keyword>
<feature type="chain" id="PRO_0000217508" description="Uncharacterized 11.9 kDa protein in 16S-23S DNA spacer">
    <location>
        <begin position="1"/>
        <end position="103"/>
    </location>
</feature>